<protein>
    <recommendedName>
        <fullName evidence="1">Ribosome maturation factor RimM</fullName>
    </recommendedName>
</protein>
<evidence type="ECO:0000255" key="1">
    <source>
        <dbReference type="HAMAP-Rule" id="MF_00014"/>
    </source>
</evidence>
<organism>
    <name type="scientific">Roseiflexus sp. (strain RS-1)</name>
    <dbReference type="NCBI Taxonomy" id="357808"/>
    <lineage>
        <taxon>Bacteria</taxon>
        <taxon>Bacillati</taxon>
        <taxon>Chloroflexota</taxon>
        <taxon>Chloroflexia</taxon>
        <taxon>Chloroflexales</taxon>
        <taxon>Roseiflexineae</taxon>
        <taxon>Roseiflexaceae</taxon>
        <taxon>Roseiflexus</taxon>
    </lineage>
</organism>
<sequence>MMEERPSADEVLLIGKVIDAFGLRGEIKIRAITDQVDHLRRHVRTVFLGEERRPFTLQRVHEPKAGILILSLGGVTDRTTAEALRGAEVTIRECDAAPLDQDEYFIHQLYGLRVIESGGGEIGVVREVVQTGANDVIVVERQGRSDTLLPMIHDVVERLDVAAGQIVVRLLPGLIDDDNQEG</sequence>
<comment type="function">
    <text evidence="1">An accessory protein needed during the final step in the assembly of 30S ribosomal subunit, possibly for assembly of the head region. Essential for efficient processing of 16S rRNA. May be needed both before and after RbfA during the maturation of 16S rRNA. It has affinity for free ribosomal 30S subunits but not for 70S ribosomes.</text>
</comment>
<comment type="subunit">
    <text evidence="1">Binds ribosomal protein uS19.</text>
</comment>
<comment type="subcellular location">
    <subcellularLocation>
        <location evidence="1">Cytoplasm</location>
    </subcellularLocation>
</comment>
<comment type="domain">
    <text evidence="1">The PRC barrel domain binds ribosomal protein uS19.</text>
</comment>
<comment type="similarity">
    <text evidence="1">Belongs to the RimM family.</text>
</comment>
<dbReference type="EMBL" id="CP000686">
    <property type="protein sequence ID" value="ABQ89693.1"/>
    <property type="molecule type" value="Genomic_DNA"/>
</dbReference>
<dbReference type="RefSeq" id="WP_011956045.1">
    <property type="nucleotide sequence ID" value="NC_009523.1"/>
</dbReference>
<dbReference type="SMR" id="A5USU0"/>
<dbReference type="STRING" id="357808.RoseRS_1289"/>
<dbReference type="KEGG" id="rrs:RoseRS_1289"/>
<dbReference type="eggNOG" id="COG0806">
    <property type="taxonomic scope" value="Bacteria"/>
</dbReference>
<dbReference type="HOGENOM" id="CLU_077636_3_2_0"/>
<dbReference type="OrthoDB" id="9810331at2"/>
<dbReference type="Proteomes" id="UP000006554">
    <property type="component" value="Chromosome"/>
</dbReference>
<dbReference type="GO" id="GO:0005737">
    <property type="term" value="C:cytoplasm"/>
    <property type="evidence" value="ECO:0007669"/>
    <property type="project" value="UniProtKB-SubCell"/>
</dbReference>
<dbReference type="GO" id="GO:0005840">
    <property type="term" value="C:ribosome"/>
    <property type="evidence" value="ECO:0007669"/>
    <property type="project" value="InterPro"/>
</dbReference>
<dbReference type="GO" id="GO:0043022">
    <property type="term" value="F:ribosome binding"/>
    <property type="evidence" value="ECO:0007669"/>
    <property type="project" value="InterPro"/>
</dbReference>
<dbReference type="GO" id="GO:0042274">
    <property type="term" value="P:ribosomal small subunit biogenesis"/>
    <property type="evidence" value="ECO:0007669"/>
    <property type="project" value="UniProtKB-UniRule"/>
</dbReference>
<dbReference type="GO" id="GO:0006364">
    <property type="term" value="P:rRNA processing"/>
    <property type="evidence" value="ECO:0007669"/>
    <property type="project" value="UniProtKB-UniRule"/>
</dbReference>
<dbReference type="Gene3D" id="2.30.30.240">
    <property type="entry name" value="PRC-barrel domain"/>
    <property type="match status" value="1"/>
</dbReference>
<dbReference type="Gene3D" id="2.40.30.60">
    <property type="entry name" value="RimM"/>
    <property type="match status" value="1"/>
</dbReference>
<dbReference type="HAMAP" id="MF_00014">
    <property type="entry name" value="Ribosome_mat_RimM"/>
    <property type="match status" value="1"/>
</dbReference>
<dbReference type="InterPro" id="IPR011033">
    <property type="entry name" value="PRC_barrel-like_sf"/>
</dbReference>
<dbReference type="InterPro" id="IPR056792">
    <property type="entry name" value="PRC_RimM"/>
</dbReference>
<dbReference type="InterPro" id="IPR011961">
    <property type="entry name" value="RimM"/>
</dbReference>
<dbReference type="InterPro" id="IPR002676">
    <property type="entry name" value="RimM_N"/>
</dbReference>
<dbReference type="InterPro" id="IPR036976">
    <property type="entry name" value="RimM_N_sf"/>
</dbReference>
<dbReference type="InterPro" id="IPR009000">
    <property type="entry name" value="Transl_B-barrel_sf"/>
</dbReference>
<dbReference type="NCBIfam" id="TIGR02273">
    <property type="entry name" value="16S_RimM"/>
    <property type="match status" value="1"/>
</dbReference>
<dbReference type="PANTHER" id="PTHR33692">
    <property type="entry name" value="RIBOSOME MATURATION FACTOR RIMM"/>
    <property type="match status" value="1"/>
</dbReference>
<dbReference type="PANTHER" id="PTHR33692:SF1">
    <property type="entry name" value="RIBOSOME MATURATION FACTOR RIMM"/>
    <property type="match status" value="1"/>
</dbReference>
<dbReference type="Pfam" id="PF24986">
    <property type="entry name" value="PRC_RimM"/>
    <property type="match status" value="1"/>
</dbReference>
<dbReference type="Pfam" id="PF01782">
    <property type="entry name" value="RimM"/>
    <property type="match status" value="1"/>
</dbReference>
<dbReference type="SUPFAM" id="SSF50346">
    <property type="entry name" value="PRC-barrel domain"/>
    <property type="match status" value="1"/>
</dbReference>
<dbReference type="SUPFAM" id="SSF50447">
    <property type="entry name" value="Translation proteins"/>
    <property type="match status" value="1"/>
</dbReference>
<accession>A5USU0</accession>
<keyword id="KW-0143">Chaperone</keyword>
<keyword id="KW-0963">Cytoplasm</keyword>
<keyword id="KW-0690">Ribosome biogenesis</keyword>
<keyword id="KW-0698">rRNA processing</keyword>
<name>RIMM_ROSS1</name>
<proteinExistence type="inferred from homology"/>
<gene>
    <name evidence="1" type="primary">rimM</name>
    <name type="ordered locus">RoseRS_1289</name>
</gene>
<feature type="chain" id="PRO_0000321749" description="Ribosome maturation factor RimM">
    <location>
        <begin position="1"/>
        <end position="182"/>
    </location>
</feature>
<feature type="domain" description="PRC barrel" evidence="1">
    <location>
        <begin position="101"/>
        <end position="174"/>
    </location>
</feature>
<reference key="1">
    <citation type="submission" date="2007-04" db="EMBL/GenBank/DDBJ databases">
        <title>Complete sequence of Roseiflexus sp. RS-1.</title>
        <authorList>
            <consortium name="US DOE Joint Genome Institute"/>
            <person name="Copeland A."/>
            <person name="Lucas S."/>
            <person name="Lapidus A."/>
            <person name="Barry K."/>
            <person name="Detter J.C."/>
            <person name="Glavina del Rio T."/>
            <person name="Hammon N."/>
            <person name="Israni S."/>
            <person name="Dalin E."/>
            <person name="Tice H."/>
            <person name="Pitluck S."/>
            <person name="Chertkov O."/>
            <person name="Brettin T."/>
            <person name="Bruce D."/>
            <person name="Han C."/>
            <person name="Schmutz J."/>
            <person name="Larimer F."/>
            <person name="Land M."/>
            <person name="Hauser L."/>
            <person name="Kyrpides N."/>
            <person name="Mikhailova N."/>
            <person name="Bryant D.A."/>
            <person name="Richardson P."/>
        </authorList>
    </citation>
    <scope>NUCLEOTIDE SEQUENCE [LARGE SCALE GENOMIC DNA]</scope>
    <source>
        <strain>RS-1</strain>
    </source>
</reference>